<reference key="1">
    <citation type="journal article" date="1994" name="Mol. Microbiol.">
        <title>Bacillus anthracis pXO1 virulence plasmid encodes a type 1 DNA topoisomerase.</title>
        <authorList>
            <person name="Fouet A."/>
            <person name="Sirard J.-C."/>
            <person name="Mock M."/>
        </authorList>
    </citation>
    <scope>NUCLEOTIDE SEQUENCE [GENOMIC DNA]</scope>
    <source>
        <strain>7702</strain>
    </source>
</reference>
<reference key="2">
    <citation type="journal article" date="1999" name="J. Bacteriol.">
        <title>Sequence and organization of pXO1, the large Bacillus anthracis plasmid harboring the anthrax toxin genes.</title>
        <authorList>
            <person name="Okinaka R.T."/>
            <person name="Cloud K."/>
            <person name="Hampton O."/>
            <person name="Hoffmaster A.R."/>
            <person name="Hill K.K."/>
            <person name="Keim P."/>
            <person name="Koehler T.M."/>
            <person name="Lamke G."/>
            <person name="Kumano S."/>
            <person name="Mahillon J."/>
            <person name="Manter D."/>
            <person name="Martinez Y."/>
            <person name="Ricke D."/>
            <person name="Svensson R."/>
            <person name="Jackson P.J."/>
        </authorList>
    </citation>
    <scope>NUCLEOTIDE SEQUENCE [LARGE SCALE GENOMIC DNA]</scope>
    <source>
        <strain>Sterne</strain>
    </source>
</reference>
<reference key="3">
    <citation type="journal article" date="2002" name="Science">
        <title>Comparative genome sequencing for discovery of novel polymorphisms in Bacillus anthracis.</title>
        <authorList>
            <person name="Read T.D."/>
            <person name="Salzberg S.L."/>
            <person name="Pop M."/>
            <person name="Shumway M.F."/>
            <person name="Umayam L."/>
            <person name="Jiang L."/>
            <person name="Holtzapple E."/>
            <person name="Busch J.D."/>
            <person name="Smith K.L."/>
            <person name="Schupp J.M."/>
            <person name="Solomon D."/>
            <person name="Keim P."/>
            <person name="Fraser C.M."/>
        </authorList>
    </citation>
    <scope>NUCLEOTIDE SEQUENCE [GENOMIC DNA]</scope>
    <source>
        <strain>Ames / isolate Florida / A2012</strain>
    </source>
</reference>
<reference key="4">
    <citation type="journal article" date="2009" name="J. Bacteriol.">
        <title>The complete genome sequence of Bacillus anthracis Ames 'Ancestor'.</title>
        <authorList>
            <person name="Ravel J."/>
            <person name="Jiang L."/>
            <person name="Stanley S.T."/>
            <person name="Wilson M.R."/>
            <person name="Decker R.S."/>
            <person name="Read T.D."/>
            <person name="Worsham P."/>
            <person name="Keim P.S."/>
            <person name="Salzberg S.L."/>
            <person name="Fraser-Liggett C.M."/>
            <person name="Rasko D.A."/>
        </authorList>
    </citation>
    <scope>NUCLEOTIDE SEQUENCE [LARGE SCALE GENOMIC DNA]</scope>
    <source>
        <strain>Ames ancestor</strain>
    </source>
</reference>
<comment type="function">
    <text evidence="1">Releases the supercoiling and torsional tension of DNA, which is introduced during the DNA replication and transcription, by transiently cleaving and rejoining one strand of the DNA duplex. Introduces a single-strand break via transesterification at a target site in duplex DNA. The scissile phosphodiester is attacked by the catalytic tyrosine of the enzyme, resulting in the formation of a DNA-(5'-phosphotyrosyl)-enzyme intermediate and the expulsion of a 3'-OH DNA strand. The free DNA strand then undergoes passage around the unbroken strand, thus removing DNA supercoils. Finally, in the religation step, the DNA 3'-OH attacks the covalent intermediate to expel the active-site tyrosine and restore the DNA phosphodiester backbone (By similarity).</text>
</comment>
<comment type="catalytic activity">
    <reaction evidence="4">
        <text>ATP-independent breakage of single-stranded DNA, followed by passage and rejoining.</text>
        <dbReference type="EC" id="5.6.2.1"/>
    </reaction>
</comment>
<comment type="subunit">
    <text evidence="1">Monomer.</text>
</comment>
<comment type="similarity">
    <text evidence="3 5">Belongs to the type IA topoisomerase family.</text>
</comment>
<comment type="sequence caution" evidence="5">
    <conflict type="erroneous initiation">
        <sequence resource="EMBL-CDS" id="AAA22859"/>
    </conflict>
    <text>Extended N-terminus.</text>
</comment>
<comment type="sequence caution" evidence="5">
    <conflict type="erroneous initiation">
        <sequence resource="EMBL-CDS" id="AAD32445"/>
    </conflict>
    <text>Extended N-terminus.</text>
</comment>
<comment type="sequence caution" evidence="5">
    <conflict type="erroneous initiation">
        <sequence resource="EMBL-CDS" id="AAM26155"/>
    </conflict>
    <text>Extended N-terminus.</text>
</comment>
<proteinExistence type="inferred from homology"/>
<accession>P40114</accession>
<accession>Q8KYH4</accession>
<evidence type="ECO:0000250" key="1"/>
<evidence type="ECO:0000255" key="2">
    <source>
        <dbReference type="PROSITE-ProRule" id="PRU00995"/>
    </source>
</evidence>
<evidence type="ECO:0000255" key="3">
    <source>
        <dbReference type="PROSITE-ProRule" id="PRU01383"/>
    </source>
</evidence>
<evidence type="ECO:0000255" key="4">
    <source>
        <dbReference type="PROSITE-ProRule" id="PRU10131"/>
    </source>
</evidence>
<evidence type="ECO:0000305" key="5"/>
<name>TOP1_BACAN</name>
<dbReference type="EC" id="5.6.2.1" evidence="4"/>
<dbReference type="EMBL" id="M97227">
    <property type="protein sequence ID" value="AAA22859.1"/>
    <property type="status" value="ALT_INIT"/>
    <property type="molecule type" value="Genomic_DNA"/>
</dbReference>
<dbReference type="EMBL" id="AF065404">
    <property type="protein sequence ID" value="AAD32445.1"/>
    <property type="status" value="ALT_INIT"/>
    <property type="molecule type" value="Genomic_DNA"/>
</dbReference>
<dbReference type="EMBL" id="AE011190">
    <property type="protein sequence ID" value="AAM26155.2"/>
    <property type="status" value="ALT_INIT"/>
    <property type="molecule type" value="Genomic_DNA"/>
</dbReference>
<dbReference type="EMBL" id="AE017336">
    <property type="protein sequence ID" value="AAT35502.1"/>
    <property type="molecule type" value="Genomic_DNA"/>
</dbReference>
<dbReference type="PIR" id="S41543">
    <property type="entry name" value="S41543"/>
</dbReference>
<dbReference type="RefSeq" id="NP_052837.1">
    <property type="nucleotide sequence ID" value="NC_001496.1"/>
</dbReference>
<dbReference type="SMR" id="P40114"/>
<dbReference type="KEGG" id="bar:GBAA_pXO1_0213"/>
<dbReference type="HOGENOM" id="CLU_002929_5_6_9"/>
<dbReference type="OMA" id="PDISAIW"/>
<dbReference type="Proteomes" id="UP000000594">
    <property type="component" value="Plasmid pXO1"/>
</dbReference>
<dbReference type="GO" id="GO:0043597">
    <property type="term" value="C:cytoplasmic replication fork"/>
    <property type="evidence" value="ECO:0007669"/>
    <property type="project" value="TreeGrafter"/>
</dbReference>
<dbReference type="GO" id="GO:0003677">
    <property type="term" value="F:DNA binding"/>
    <property type="evidence" value="ECO:0007669"/>
    <property type="project" value="UniProtKB-KW"/>
</dbReference>
<dbReference type="GO" id="GO:0003917">
    <property type="term" value="F:DNA topoisomerase type I (single strand cut, ATP-independent) activity"/>
    <property type="evidence" value="ECO:0007669"/>
    <property type="project" value="UniProtKB-EC"/>
</dbReference>
<dbReference type="GO" id="GO:0008270">
    <property type="term" value="F:zinc ion binding"/>
    <property type="evidence" value="ECO:0007669"/>
    <property type="project" value="UniProtKB-KW"/>
</dbReference>
<dbReference type="GO" id="GO:0006310">
    <property type="term" value="P:DNA recombination"/>
    <property type="evidence" value="ECO:0007669"/>
    <property type="project" value="TreeGrafter"/>
</dbReference>
<dbReference type="GO" id="GO:0006281">
    <property type="term" value="P:DNA repair"/>
    <property type="evidence" value="ECO:0007669"/>
    <property type="project" value="TreeGrafter"/>
</dbReference>
<dbReference type="GO" id="GO:0006265">
    <property type="term" value="P:DNA topological change"/>
    <property type="evidence" value="ECO:0007669"/>
    <property type="project" value="InterPro"/>
</dbReference>
<dbReference type="CDD" id="cd00186">
    <property type="entry name" value="TOP1Ac"/>
    <property type="match status" value="1"/>
</dbReference>
<dbReference type="CDD" id="cd03362">
    <property type="entry name" value="TOPRIM_TopoIA_TopoIII"/>
    <property type="match status" value="1"/>
</dbReference>
<dbReference type="Gene3D" id="3.40.50.140">
    <property type="match status" value="1"/>
</dbReference>
<dbReference type="Gene3D" id="1.10.460.10">
    <property type="entry name" value="Topoisomerase I, domain 2"/>
    <property type="match status" value="1"/>
</dbReference>
<dbReference type="Gene3D" id="2.70.20.10">
    <property type="entry name" value="Topoisomerase I, domain 3"/>
    <property type="match status" value="1"/>
</dbReference>
<dbReference type="Gene3D" id="1.10.290.10">
    <property type="entry name" value="Topoisomerase I, domain 4"/>
    <property type="match status" value="1"/>
</dbReference>
<dbReference type="InterPro" id="IPR000380">
    <property type="entry name" value="Topo_IA"/>
</dbReference>
<dbReference type="InterPro" id="IPR003601">
    <property type="entry name" value="Topo_IA_2"/>
</dbReference>
<dbReference type="InterPro" id="IPR023406">
    <property type="entry name" value="Topo_IA_AS"/>
</dbReference>
<dbReference type="InterPro" id="IPR013497">
    <property type="entry name" value="Topo_IA_cen"/>
</dbReference>
<dbReference type="InterPro" id="IPR013824">
    <property type="entry name" value="Topo_IA_cen_sub1"/>
</dbReference>
<dbReference type="InterPro" id="IPR013825">
    <property type="entry name" value="Topo_IA_cen_sub2"/>
</dbReference>
<dbReference type="InterPro" id="IPR013826">
    <property type="entry name" value="Topo_IA_cen_sub3"/>
</dbReference>
<dbReference type="InterPro" id="IPR023405">
    <property type="entry name" value="Topo_IA_core_domain"/>
</dbReference>
<dbReference type="InterPro" id="IPR003602">
    <property type="entry name" value="Topo_IA_DNA-bd_dom"/>
</dbReference>
<dbReference type="InterPro" id="IPR025589">
    <property type="entry name" value="Toprim_C_rpt"/>
</dbReference>
<dbReference type="InterPro" id="IPR006171">
    <property type="entry name" value="TOPRIM_dom"/>
</dbReference>
<dbReference type="InterPro" id="IPR034144">
    <property type="entry name" value="TOPRIM_TopoIII"/>
</dbReference>
<dbReference type="PANTHER" id="PTHR11390:SF21">
    <property type="entry name" value="DNA TOPOISOMERASE 3-ALPHA"/>
    <property type="match status" value="1"/>
</dbReference>
<dbReference type="PANTHER" id="PTHR11390">
    <property type="entry name" value="PROKARYOTIC DNA TOPOISOMERASE"/>
    <property type="match status" value="1"/>
</dbReference>
<dbReference type="Pfam" id="PF01131">
    <property type="entry name" value="Topoisom_bac"/>
    <property type="match status" value="1"/>
</dbReference>
<dbReference type="Pfam" id="PF01751">
    <property type="entry name" value="Toprim"/>
    <property type="match status" value="1"/>
</dbReference>
<dbReference type="Pfam" id="PF13342">
    <property type="entry name" value="Toprim_Crpt"/>
    <property type="match status" value="3"/>
</dbReference>
<dbReference type="PRINTS" id="PR00417">
    <property type="entry name" value="PRTPISMRASEI"/>
</dbReference>
<dbReference type="SMART" id="SM00437">
    <property type="entry name" value="TOP1Ac"/>
    <property type="match status" value="1"/>
</dbReference>
<dbReference type="SMART" id="SM00436">
    <property type="entry name" value="TOP1Bc"/>
    <property type="match status" value="1"/>
</dbReference>
<dbReference type="SMART" id="SM00493">
    <property type="entry name" value="TOPRIM"/>
    <property type="match status" value="1"/>
</dbReference>
<dbReference type="SUPFAM" id="SSF56712">
    <property type="entry name" value="Prokaryotic type I DNA topoisomerase"/>
    <property type="match status" value="1"/>
</dbReference>
<dbReference type="PROSITE" id="PS00396">
    <property type="entry name" value="TOPO_IA_1"/>
    <property type="match status" value="1"/>
</dbReference>
<dbReference type="PROSITE" id="PS52039">
    <property type="entry name" value="TOPO_IA_2"/>
    <property type="match status" value="1"/>
</dbReference>
<dbReference type="PROSITE" id="PS50880">
    <property type="entry name" value="TOPRIM"/>
    <property type="match status" value="1"/>
</dbReference>
<gene>
    <name type="primary">topX</name>
    <name type="synonym">top1</name>
    <name type="ordered locus">pXO1-142</name>
    <name type="ordered locus">BXA0213</name>
    <name type="ordered locus">GBAA_pXO1_0213</name>
</gene>
<sequence length="870" mass="100092">MKSPRFRHSQKYIGSKPYYGYYENDHYIVSWCRGHLLELKNPEEMDPKYKLFQLEHLPLIFQPSYKVIQENAEQLQILVKLLQRPDVDHAVNICDADREGELIYREVYEYAGVNKKQSRVYKSSFEAAELEAALNRLESASKYDGLAYSAKARQYLDYLLGMNITRGCTTKLAQNKFLLSSGRVQMCLLHEIRQRELAIENYREQSYYHLQLITDLGLKPVMKTEDQVLNPSPLKSLGENLKDQYLTVEDFKEGTRKQNPKLLYNLTDLYKDAHAQLQINAETAKKHIQNLYEEGFITYPRSSSRHLPTEQVDRVKGVMQALAKSRYSLLVQSVDIDAIDIKHKTFDDDLVSSHFAIIPTTKQYQEEGRPEIEKQLYSLVVKRFVGNFMRPAVYLVRDVSLIDAMGNTYQIKESVLREKGFLEVFQEEVKEESVETFKVPILQKGQELQIYDFELQESKTKKPALHTESSILTFMETAGRKIDDEHLKELMKGKRIGTVATEAAFIPVLHEKNFIDIEKGKIITTPIGRAFIEQFPVQQIKDPLYTAEMEGMIHRIEKNEMSYENFIAQTNAFVQKITQEIIRIPDTVSYNLIETWKKQIEVCQCPCGNGIILDRGKFFGCSNHPNCNKGLPKRVKEKTIPTAQVKKLFEENKTDIIKGFKSNGKEFSAYLAFVNGEVSFNLPSVEELSLGQCPKCQKGKILNRKTFFGCSEYQNGCDFMLPAKIKGKKLSDSQIKKLVNNHVTDFINGFSGEKGEFTAAIRLKTDLSICFEFPTTDDRTVGKCPLCQSRVIIGKTNYLCEQYKRGCDFIVSGMILEKRITASQIKKLLEKNMTDTVKGFVSKKTGKSFDAKLTYDSTQKRVTFIYEKKK</sequence>
<geneLocation type="plasmid">
    <name>pXO1</name>
</geneLocation>
<feature type="chain" id="PRO_0000145139" description="DNA topoisomerase 1">
    <location>
        <begin position="1"/>
        <end position="870"/>
    </location>
</feature>
<feature type="domain" description="Toprim" evidence="2">
    <location>
        <begin position="1"/>
        <end position="128"/>
    </location>
</feature>
<feature type="domain" description="Topo IA-type catalytic" evidence="3">
    <location>
        <begin position="143"/>
        <end position="578"/>
    </location>
</feature>
<feature type="zinc finger region" description="C4-type 1">
    <location>
        <begin position="603"/>
        <end position="627"/>
    </location>
</feature>
<feature type="zinc finger region" description="C4-type 2">
    <location>
        <begin position="693"/>
        <end position="717"/>
    </location>
</feature>
<feature type="zinc finger region" description="C4-type 3">
    <location>
        <begin position="784"/>
        <end position="807"/>
    </location>
</feature>
<feature type="region of interest" description="Interaction with DNA" evidence="1">
    <location>
        <begin position="180"/>
        <end position="185"/>
    </location>
</feature>
<feature type="active site" description="O-(5'-phospho-DNA)-tyrosine intermediate" evidence="3">
    <location>
        <position position="299"/>
    </location>
</feature>
<feature type="site" description="Interaction with DNA" evidence="2">
    <location>
        <position position="35"/>
    </location>
</feature>
<feature type="site" description="Interaction with DNA" evidence="2">
    <location>
        <position position="153"/>
    </location>
</feature>
<feature type="site" description="Interaction with DNA" evidence="2">
    <location>
        <position position="157"/>
    </location>
</feature>
<feature type="site" description="Interaction with DNA" evidence="2">
    <location>
        <position position="301"/>
    </location>
</feature>
<keyword id="KW-0238">DNA-binding</keyword>
<keyword id="KW-0413">Isomerase</keyword>
<keyword id="KW-0479">Metal-binding</keyword>
<keyword id="KW-0614">Plasmid</keyword>
<keyword id="KW-1185">Reference proteome</keyword>
<keyword id="KW-0677">Repeat</keyword>
<keyword id="KW-0799">Topoisomerase</keyword>
<keyword id="KW-0843">Virulence</keyword>
<keyword id="KW-0862">Zinc</keyword>
<keyword id="KW-0863">Zinc-finger</keyword>
<organism>
    <name type="scientific">Bacillus anthracis</name>
    <dbReference type="NCBI Taxonomy" id="1392"/>
    <lineage>
        <taxon>Bacteria</taxon>
        <taxon>Bacillati</taxon>
        <taxon>Bacillota</taxon>
        <taxon>Bacilli</taxon>
        <taxon>Bacillales</taxon>
        <taxon>Bacillaceae</taxon>
        <taxon>Bacillus</taxon>
        <taxon>Bacillus cereus group</taxon>
    </lineage>
</organism>
<protein>
    <recommendedName>
        <fullName>DNA topoisomerase 1</fullName>
        <ecNumber evidence="4">5.6.2.1</ecNumber>
    </recommendedName>
    <alternativeName>
        <fullName>DNA topoisomerase I</fullName>
    </alternativeName>
    <alternativeName>
        <fullName>Omega-protein</fullName>
    </alternativeName>
    <alternativeName>
        <fullName>Relaxing enzyme</fullName>
    </alternativeName>
    <alternativeName>
        <fullName>Swivelase</fullName>
    </alternativeName>
    <alternativeName>
        <fullName>Untwisting enzyme</fullName>
    </alternativeName>
</protein>